<sequence>MKRTYQPSKLVRKRRHGFRARMSTKGGRKVLTARRARGRKRLSA</sequence>
<feature type="chain" id="PRO_1000013452" description="Large ribosomal subunit protein bL34">
    <location>
        <begin position="1"/>
        <end position="44"/>
    </location>
</feature>
<feature type="region of interest" description="Disordered" evidence="2">
    <location>
        <begin position="1"/>
        <end position="44"/>
    </location>
</feature>
<feature type="compositionally biased region" description="Basic residues" evidence="2">
    <location>
        <begin position="10"/>
        <end position="19"/>
    </location>
</feature>
<feature type="compositionally biased region" description="Basic residues" evidence="2">
    <location>
        <begin position="26"/>
        <end position="44"/>
    </location>
</feature>
<comment type="similarity">
    <text evidence="1">Belongs to the bacterial ribosomal protein bL34 family.</text>
</comment>
<evidence type="ECO:0000255" key="1">
    <source>
        <dbReference type="HAMAP-Rule" id="MF_00391"/>
    </source>
</evidence>
<evidence type="ECO:0000256" key="2">
    <source>
        <dbReference type="SAM" id="MobiDB-lite"/>
    </source>
</evidence>
<evidence type="ECO:0000305" key="3"/>
<organism>
    <name type="scientific">Sinorhizobium medicae (strain WSM419)</name>
    <name type="common">Ensifer medicae</name>
    <dbReference type="NCBI Taxonomy" id="366394"/>
    <lineage>
        <taxon>Bacteria</taxon>
        <taxon>Pseudomonadati</taxon>
        <taxon>Pseudomonadota</taxon>
        <taxon>Alphaproteobacteria</taxon>
        <taxon>Hyphomicrobiales</taxon>
        <taxon>Rhizobiaceae</taxon>
        <taxon>Sinorhizobium/Ensifer group</taxon>
        <taxon>Sinorhizobium</taxon>
    </lineage>
</organism>
<dbReference type="EMBL" id="CP000738">
    <property type="protein sequence ID" value="ABR58941.1"/>
    <property type="molecule type" value="Genomic_DNA"/>
</dbReference>
<dbReference type="RefSeq" id="WP_003531576.1">
    <property type="nucleotide sequence ID" value="NC_009636.1"/>
</dbReference>
<dbReference type="RefSeq" id="YP_001325776.1">
    <property type="nucleotide sequence ID" value="NC_009636.1"/>
</dbReference>
<dbReference type="SMR" id="A6U5L1"/>
<dbReference type="STRING" id="366394.Smed_0081"/>
<dbReference type="GeneID" id="89574774"/>
<dbReference type="KEGG" id="smd:Smed_0081"/>
<dbReference type="PATRIC" id="fig|366394.8.peg.3137"/>
<dbReference type="eggNOG" id="COG0230">
    <property type="taxonomic scope" value="Bacteria"/>
</dbReference>
<dbReference type="HOGENOM" id="CLU_129938_2_0_5"/>
<dbReference type="OrthoDB" id="9804164at2"/>
<dbReference type="Proteomes" id="UP000001108">
    <property type="component" value="Chromosome"/>
</dbReference>
<dbReference type="GO" id="GO:1990904">
    <property type="term" value="C:ribonucleoprotein complex"/>
    <property type="evidence" value="ECO:0007669"/>
    <property type="project" value="UniProtKB-KW"/>
</dbReference>
<dbReference type="GO" id="GO:0005840">
    <property type="term" value="C:ribosome"/>
    <property type="evidence" value="ECO:0007669"/>
    <property type="project" value="UniProtKB-KW"/>
</dbReference>
<dbReference type="GO" id="GO:0003735">
    <property type="term" value="F:structural constituent of ribosome"/>
    <property type="evidence" value="ECO:0007669"/>
    <property type="project" value="InterPro"/>
</dbReference>
<dbReference type="GO" id="GO:0006412">
    <property type="term" value="P:translation"/>
    <property type="evidence" value="ECO:0007669"/>
    <property type="project" value="UniProtKB-UniRule"/>
</dbReference>
<dbReference type="FunFam" id="1.10.287.3980:FF:000001">
    <property type="entry name" value="Mitochondrial ribosomal protein L34"/>
    <property type="match status" value="1"/>
</dbReference>
<dbReference type="Gene3D" id="1.10.287.3980">
    <property type="match status" value="1"/>
</dbReference>
<dbReference type="HAMAP" id="MF_00391">
    <property type="entry name" value="Ribosomal_bL34"/>
    <property type="match status" value="1"/>
</dbReference>
<dbReference type="InterPro" id="IPR000271">
    <property type="entry name" value="Ribosomal_bL34"/>
</dbReference>
<dbReference type="InterPro" id="IPR020939">
    <property type="entry name" value="Ribosomal_bL34_CS"/>
</dbReference>
<dbReference type="NCBIfam" id="TIGR01030">
    <property type="entry name" value="rpmH_bact"/>
    <property type="match status" value="1"/>
</dbReference>
<dbReference type="PANTHER" id="PTHR14503:SF4">
    <property type="entry name" value="LARGE RIBOSOMAL SUBUNIT PROTEIN BL34M"/>
    <property type="match status" value="1"/>
</dbReference>
<dbReference type="PANTHER" id="PTHR14503">
    <property type="entry name" value="MITOCHONDRIAL RIBOSOMAL PROTEIN 34 FAMILY MEMBER"/>
    <property type="match status" value="1"/>
</dbReference>
<dbReference type="Pfam" id="PF00468">
    <property type="entry name" value="Ribosomal_L34"/>
    <property type="match status" value="1"/>
</dbReference>
<dbReference type="PROSITE" id="PS00784">
    <property type="entry name" value="RIBOSOMAL_L34"/>
    <property type="match status" value="1"/>
</dbReference>
<proteinExistence type="inferred from homology"/>
<accession>A6U5L1</accession>
<gene>
    <name evidence="1" type="primary">rpmH</name>
    <name type="ordered locus">Smed_0081</name>
</gene>
<name>RL34_SINMW</name>
<reference key="1">
    <citation type="submission" date="2007-06" db="EMBL/GenBank/DDBJ databases">
        <title>Complete sequence of Sinorhizobium medicae WSM419 chromosome.</title>
        <authorList>
            <consortium name="US DOE Joint Genome Institute"/>
            <person name="Copeland A."/>
            <person name="Lucas S."/>
            <person name="Lapidus A."/>
            <person name="Barry K."/>
            <person name="Glavina del Rio T."/>
            <person name="Dalin E."/>
            <person name="Tice H."/>
            <person name="Pitluck S."/>
            <person name="Chain P."/>
            <person name="Malfatti S."/>
            <person name="Shin M."/>
            <person name="Vergez L."/>
            <person name="Schmutz J."/>
            <person name="Larimer F."/>
            <person name="Land M."/>
            <person name="Hauser L."/>
            <person name="Kyrpides N."/>
            <person name="Mikhailova N."/>
            <person name="Reeve W.G."/>
            <person name="Richardson P."/>
        </authorList>
    </citation>
    <scope>NUCLEOTIDE SEQUENCE [LARGE SCALE GENOMIC DNA]</scope>
    <source>
        <strain>WSM419</strain>
    </source>
</reference>
<keyword id="KW-0687">Ribonucleoprotein</keyword>
<keyword id="KW-0689">Ribosomal protein</keyword>
<protein>
    <recommendedName>
        <fullName evidence="1">Large ribosomal subunit protein bL34</fullName>
    </recommendedName>
    <alternativeName>
        <fullName evidence="3">50S ribosomal protein L34</fullName>
    </alternativeName>
</protein>